<reference key="1">
    <citation type="journal article" date="2000" name="Nature">
        <title>Sequence and analysis of chromosome 5 of the plant Arabidopsis thaliana.</title>
        <authorList>
            <person name="Tabata S."/>
            <person name="Kaneko T."/>
            <person name="Nakamura Y."/>
            <person name="Kotani H."/>
            <person name="Kato T."/>
            <person name="Asamizu E."/>
            <person name="Miyajima N."/>
            <person name="Sasamoto S."/>
            <person name="Kimura T."/>
            <person name="Hosouchi T."/>
            <person name="Kawashima K."/>
            <person name="Kohara M."/>
            <person name="Matsumoto M."/>
            <person name="Matsuno A."/>
            <person name="Muraki A."/>
            <person name="Nakayama S."/>
            <person name="Nakazaki N."/>
            <person name="Naruo K."/>
            <person name="Okumura S."/>
            <person name="Shinpo S."/>
            <person name="Takeuchi C."/>
            <person name="Wada T."/>
            <person name="Watanabe A."/>
            <person name="Yamada M."/>
            <person name="Yasuda M."/>
            <person name="Sato S."/>
            <person name="de la Bastide M."/>
            <person name="Huang E."/>
            <person name="Spiegel L."/>
            <person name="Gnoj L."/>
            <person name="O'Shaughnessy A."/>
            <person name="Preston R."/>
            <person name="Habermann K."/>
            <person name="Murray J."/>
            <person name="Johnson D."/>
            <person name="Rohlfing T."/>
            <person name="Nelson J."/>
            <person name="Stoneking T."/>
            <person name="Pepin K."/>
            <person name="Spieth J."/>
            <person name="Sekhon M."/>
            <person name="Armstrong J."/>
            <person name="Becker M."/>
            <person name="Belter E."/>
            <person name="Cordum H."/>
            <person name="Cordes M."/>
            <person name="Courtney L."/>
            <person name="Courtney W."/>
            <person name="Dante M."/>
            <person name="Du H."/>
            <person name="Edwards J."/>
            <person name="Fryman J."/>
            <person name="Haakensen B."/>
            <person name="Lamar E."/>
            <person name="Latreille P."/>
            <person name="Leonard S."/>
            <person name="Meyer R."/>
            <person name="Mulvaney E."/>
            <person name="Ozersky P."/>
            <person name="Riley A."/>
            <person name="Strowmatt C."/>
            <person name="Wagner-McPherson C."/>
            <person name="Wollam A."/>
            <person name="Yoakum M."/>
            <person name="Bell M."/>
            <person name="Dedhia N."/>
            <person name="Parnell L."/>
            <person name="Shah R."/>
            <person name="Rodriguez M."/>
            <person name="Hoon See L."/>
            <person name="Vil D."/>
            <person name="Baker J."/>
            <person name="Kirchoff K."/>
            <person name="Toth K."/>
            <person name="King L."/>
            <person name="Bahret A."/>
            <person name="Miller B."/>
            <person name="Marra M.A."/>
            <person name="Martienssen R."/>
            <person name="McCombie W.R."/>
            <person name="Wilson R.K."/>
            <person name="Murphy G."/>
            <person name="Bancroft I."/>
            <person name="Volckaert G."/>
            <person name="Wambutt R."/>
            <person name="Duesterhoeft A."/>
            <person name="Stiekema W."/>
            <person name="Pohl T."/>
            <person name="Entian K.-D."/>
            <person name="Terryn N."/>
            <person name="Hartley N."/>
            <person name="Bent E."/>
            <person name="Johnson S."/>
            <person name="Langham S.-A."/>
            <person name="McCullagh B."/>
            <person name="Robben J."/>
            <person name="Grymonprez B."/>
            <person name="Zimmermann W."/>
            <person name="Ramsperger U."/>
            <person name="Wedler H."/>
            <person name="Balke K."/>
            <person name="Wedler E."/>
            <person name="Peters S."/>
            <person name="van Staveren M."/>
            <person name="Dirkse W."/>
            <person name="Mooijman P."/>
            <person name="Klein Lankhorst R."/>
            <person name="Weitzenegger T."/>
            <person name="Bothe G."/>
            <person name="Rose M."/>
            <person name="Hauf J."/>
            <person name="Berneiser S."/>
            <person name="Hempel S."/>
            <person name="Feldpausch M."/>
            <person name="Lamberth S."/>
            <person name="Villarroel R."/>
            <person name="Gielen J."/>
            <person name="Ardiles W."/>
            <person name="Bents O."/>
            <person name="Lemcke K."/>
            <person name="Kolesov G."/>
            <person name="Mayer K.F.X."/>
            <person name="Rudd S."/>
            <person name="Schoof H."/>
            <person name="Schueller C."/>
            <person name="Zaccaria P."/>
            <person name="Mewes H.-W."/>
            <person name="Bevan M."/>
            <person name="Fransz P.F."/>
        </authorList>
    </citation>
    <scope>NUCLEOTIDE SEQUENCE [LARGE SCALE GENOMIC DNA]</scope>
    <source>
        <strain>cv. Columbia</strain>
    </source>
</reference>
<reference key="2">
    <citation type="journal article" date="2017" name="Plant J.">
        <title>Araport11: a complete reannotation of the Arabidopsis thaliana reference genome.</title>
        <authorList>
            <person name="Cheng C.Y."/>
            <person name="Krishnakumar V."/>
            <person name="Chan A.P."/>
            <person name="Thibaud-Nissen F."/>
            <person name="Schobel S."/>
            <person name="Town C.D."/>
        </authorList>
    </citation>
    <scope>GENOME REANNOTATION</scope>
    <source>
        <strain>cv. Columbia</strain>
    </source>
</reference>
<reference key="3">
    <citation type="journal article" date="2006" name="Genes Dev.">
        <title>Auxin biosynthesis by the YUCCA flavin monooxygenases controls the formation of floral organs and vascular tissues in Arabidopsis.</title>
        <authorList>
            <person name="Cheng Y."/>
            <person name="Dai X."/>
            <person name="Zhao Y."/>
        </authorList>
    </citation>
    <scope>FUNCTION</scope>
    <scope>TISSUE SPECIFICITY</scope>
    <scope>GENE FAMILY</scope>
    <scope>NOMENCLATURE</scope>
    <scope>DISRUPTION PHENOTYPE</scope>
</reference>
<reference key="4">
    <citation type="journal article" date="2006" name="Plant J.">
        <title>STY1 regulates auxin homeostasis and affects apical-basal patterning of the Arabidopsis gynoecium.</title>
        <authorList>
            <person name="Sohlberg J.J."/>
            <person name="Myrenaas M."/>
            <person name="Kuusk S."/>
            <person name="Lagercrantz U."/>
            <person name="Kowalczyk M."/>
            <person name="Sandberg G."/>
            <person name="Sundberg E."/>
        </authorList>
    </citation>
    <scope>INDUCTION BY STY1</scope>
</reference>
<reference key="5">
    <citation type="journal article" date="2007" name="Plant Cell">
        <title>Auxin synthesized by the YUCCA flavin monooxygenases is essential for embryogenesis and leaf formation in Arabidopsis.</title>
        <authorList>
            <person name="Cheng Y."/>
            <person name="Dai X."/>
            <person name="Zhao Y."/>
        </authorList>
    </citation>
    <scope>FUNCTION</scope>
    <scope>DEVELOPMENTAL STAGE</scope>
</reference>
<reference key="6">
    <citation type="journal article" date="2007" name="Plant J.">
        <title>Identification of a flavin-monooxygenase as the S-oxygenating enzyme in aliphatic glucosinolate biosynthesis in Arabidopsis.</title>
        <authorList>
            <person name="Hansen B.G."/>
            <person name="Kliebenstein D.J."/>
            <person name="Halkier B.A."/>
        </authorList>
    </citation>
    <scope>GENE FAMILY</scope>
    <source>
        <strain>cv. Columbia</strain>
    </source>
</reference>
<reference key="7">
    <citation type="journal article" date="2008" name="Proc. Natl. Acad. Sci. U.S.A.">
        <title>Arabidopsis LEAFY COTYLEDON2 induces maturation traits and auxin activity: implications for somatic embryogenesis.</title>
        <authorList>
            <person name="Stone S.L."/>
            <person name="Braybrook S.A."/>
            <person name="Paula S.L."/>
            <person name="Kwong L.W."/>
            <person name="Meuser J."/>
            <person name="Pelletier J."/>
            <person name="Hsieh T.-F."/>
            <person name="Fischer R.L."/>
            <person name="Goldberg R.B."/>
            <person name="Harada J.J."/>
        </authorList>
    </citation>
    <scope>INDUCTION BY LEC2</scope>
</reference>
<reference key="8">
    <citation type="journal article" date="2009" name="Plant Cell">
        <title>The NGATHA genes direct style development in the Arabidopsis gynoecium.</title>
        <authorList>
            <person name="Trigueros M."/>
            <person name="Navarrete-Gomez M."/>
            <person name="Sato S."/>
            <person name="Christensen S.K."/>
            <person name="Pelaz S."/>
            <person name="Weigel D."/>
            <person name="Yanofsky M.F."/>
            <person name="Ferrandiz C."/>
        </authorList>
    </citation>
    <scope>INDUCTION BY NGA3</scope>
</reference>
<reference key="9">
    <citation type="journal article" date="2010" name="Plant Cell">
        <title>The Arabidopsis thaliana STYLISH1 protein acts as a transcriptional activator regulating auxin biosynthesis.</title>
        <authorList>
            <person name="Eklund D.M."/>
            <person name="Staaldal V."/>
            <person name="Valsecchi I."/>
            <person name="Cierlik I."/>
            <person name="Eriksson C."/>
            <person name="Hiratsu K."/>
            <person name="Ohme-Takagi M."/>
            <person name="Sundstroem J.F."/>
            <person name="Thelander M."/>
            <person name="Ezcurra I."/>
            <person name="Sundberg E."/>
        </authorList>
    </citation>
    <scope>INDUCTION BY STY1</scope>
</reference>
<reference key="10">
    <citation type="journal article" date="2011" name="Proc. Natl. Acad. Sci. U.S.A.">
        <title>Conversion of tryptophan to indole-3-acetic acid by TRYPTOPHAN AMINOTRANSFERASES OF ARABIDOPSIS and YUCCAs in Arabidopsis.</title>
        <authorList>
            <person name="Won C."/>
            <person name="Shen X."/>
            <person name="Mashiguchi K."/>
            <person name="Zheng Z."/>
            <person name="Dai X."/>
            <person name="Cheng Y."/>
            <person name="Kasahara H."/>
            <person name="Kamiya Y."/>
            <person name="Chory J."/>
            <person name="Zhao Y."/>
        </authorList>
    </citation>
    <scope>FUNCTION</scope>
</reference>
<reference key="11">
    <citation type="journal article" date="2012" name="Plant J.">
        <title>Alternative splicing of the auxin biosynthesis gene YUCCA4 determines its subcellular compartmentation.</title>
        <authorList>
            <person name="Kriechbaumer V."/>
            <person name="Wang P."/>
            <person name="Hawes C."/>
            <person name="Abell B.M."/>
        </authorList>
    </citation>
    <scope>FUNCTION</scope>
    <scope>CATALYTIC ACTIVITY</scope>
    <scope>ALTERNATIVE SPLICING</scope>
    <scope>SUBCELLULAR LOCATION</scope>
    <scope>TISSUE SPECIFICITY</scope>
</reference>
<accession>Q9LFM5</accession>
<accession>Q3E9I6</accession>
<protein>
    <recommendedName>
        <fullName>Probable indole-3-pyruvate monooxygenase YUCCA4</fullName>
        <ecNumber>1.14.13.168</ecNumber>
    </recommendedName>
    <alternativeName>
        <fullName>Flavin-containing monooxygenase YUCCA4</fullName>
    </alternativeName>
</protein>
<dbReference type="EC" id="1.14.13.168"/>
<dbReference type="EMBL" id="AL360314">
    <property type="protein sequence ID" value="CAB96667.1"/>
    <property type="molecule type" value="Genomic_DNA"/>
</dbReference>
<dbReference type="EMBL" id="CP002688">
    <property type="protein sequence ID" value="AED91659.1"/>
    <property type="molecule type" value="Genomic_DNA"/>
</dbReference>
<dbReference type="EMBL" id="CP002688">
    <property type="protein sequence ID" value="AED91660.1"/>
    <property type="molecule type" value="Genomic_DNA"/>
</dbReference>
<dbReference type="RefSeq" id="NP_196693.1">
    <molecule id="Q9LFM5-1"/>
    <property type="nucleotide sequence ID" value="NM_121170.3"/>
</dbReference>
<dbReference type="RefSeq" id="NP_850808.1">
    <molecule id="Q9LFM5-2"/>
    <property type="nucleotide sequence ID" value="NM_180477.2"/>
</dbReference>
<dbReference type="SMR" id="Q9LFM5"/>
<dbReference type="STRING" id="3702.Q9LFM5"/>
<dbReference type="PaxDb" id="3702-AT5G11320.1"/>
<dbReference type="ProteomicsDB" id="242922">
    <molecule id="Q9LFM5-1"/>
</dbReference>
<dbReference type="EnsemblPlants" id="AT5G11320.1">
    <molecule id="Q9LFM5-1"/>
    <property type="protein sequence ID" value="AT5G11320.1"/>
    <property type="gene ID" value="AT5G11320"/>
</dbReference>
<dbReference type="EnsemblPlants" id="AT5G11320.2">
    <molecule id="Q9LFM5-2"/>
    <property type="protein sequence ID" value="AT5G11320.2"/>
    <property type="gene ID" value="AT5G11320"/>
</dbReference>
<dbReference type="GeneID" id="831003"/>
<dbReference type="Gramene" id="AT5G11320.1">
    <molecule id="Q9LFM5-1"/>
    <property type="protein sequence ID" value="AT5G11320.1"/>
    <property type="gene ID" value="AT5G11320"/>
</dbReference>
<dbReference type="Gramene" id="AT5G11320.2">
    <molecule id="Q9LFM5-2"/>
    <property type="protein sequence ID" value="AT5G11320.2"/>
    <property type="gene ID" value="AT5G11320"/>
</dbReference>
<dbReference type="KEGG" id="ath:AT5G11320"/>
<dbReference type="Araport" id="AT5G11320"/>
<dbReference type="TAIR" id="AT5G11320">
    <property type="gene designation" value="YUC4"/>
</dbReference>
<dbReference type="eggNOG" id="KOG1399">
    <property type="taxonomic scope" value="Eukaryota"/>
</dbReference>
<dbReference type="HOGENOM" id="CLU_006909_2_0_1"/>
<dbReference type="InParanoid" id="Q9LFM5"/>
<dbReference type="OMA" id="SWRRHYD"/>
<dbReference type="PhylomeDB" id="Q9LFM5"/>
<dbReference type="BRENDA" id="1.14.13.168">
    <property type="organism ID" value="399"/>
</dbReference>
<dbReference type="UniPathway" id="UPA00151"/>
<dbReference type="PRO" id="PR:Q9LFM5"/>
<dbReference type="Proteomes" id="UP000006548">
    <property type="component" value="Chromosome 5"/>
</dbReference>
<dbReference type="ExpressionAtlas" id="Q9LFM5">
    <property type="expression patterns" value="baseline and differential"/>
</dbReference>
<dbReference type="GO" id="GO:0005829">
    <property type="term" value="C:cytosol"/>
    <property type="evidence" value="ECO:0000314"/>
    <property type="project" value="TAIR"/>
</dbReference>
<dbReference type="GO" id="GO:0005783">
    <property type="term" value="C:endoplasmic reticulum"/>
    <property type="evidence" value="ECO:0000314"/>
    <property type="project" value="TAIR"/>
</dbReference>
<dbReference type="GO" id="GO:0005789">
    <property type="term" value="C:endoplasmic reticulum membrane"/>
    <property type="evidence" value="ECO:0000314"/>
    <property type="project" value="TAIR"/>
</dbReference>
<dbReference type="GO" id="GO:0005794">
    <property type="term" value="C:Golgi apparatus"/>
    <property type="evidence" value="ECO:0000314"/>
    <property type="project" value="TAIR"/>
</dbReference>
<dbReference type="GO" id="GO:0000139">
    <property type="term" value="C:Golgi membrane"/>
    <property type="evidence" value="ECO:0000314"/>
    <property type="project" value="TAIR"/>
</dbReference>
<dbReference type="GO" id="GO:0005654">
    <property type="term" value="C:nucleoplasm"/>
    <property type="evidence" value="ECO:0000314"/>
    <property type="project" value="TAIR"/>
</dbReference>
<dbReference type="GO" id="GO:0103075">
    <property type="term" value="F:indole-3-pyruvate monooxygenase activity"/>
    <property type="evidence" value="ECO:0007669"/>
    <property type="project" value="UniProtKB-EC"/>
</dbReference>
<dbReference type="GO" id="GO:0047434">
    <property type="term" value="F:indolepyruvate decarboxylase activity"/>
    <property type="evidence" value="ECO:0000314"/>
    <property type="project" value="TAIR"/>
</dbReference>
<dbReference type="GO" id="GO:0009851">
    <property type="term" value="P:auxin biosynthetic process"/>
    <property type="evidence" value="ECO:0000314"/>
    <property type="project" value="TAIR"/>
</dbReference>
<dbReference type="GO" id="GO:0009723">
    <property type="term" value="P:response to ethylene"/>
    <property type="evidence" value="ECO:0000270"/>
    <property type="project" value="TAIR"/>
</dbReference>
<dbReference type="FunFam" id="3.50.50.60:FF:000100">
    <property type="entry name" value="Flavin-containing monooxygenase"/>
    <property type="match status" value="1"/>
</dbReference>
<dbReference type="Gene3D" id="3.50.50.60">
    <property type="entry name" value="FAD/NAD(P)-binding domain"/>
    <property type="match status" value="1"/>
</dbReference>
<dbReference type="InterPro" id="IPR050982">
    <property type="entry name" value="Auxin_biosynth/cation_transpt"/>
</dbReference>
<dbReference type="InterPro" id="IPR036188">
    <property type="entry name" value="FAD/NAD-bd_sf"/>
</dbReference>
<dbReference type="PANTHER" id="PTHR43539">
    <property type="entry name" value="FLAVIN-BINDING MONOOXYGENASE-LIKE PROTEIN (AFU_ORTHOLOGUE AFUA_4G09220)"/>
    <property type="match status" value="1"/>
</dbReference>
<dbReference type="PANTHER" id="PTHR43539:SF78">
    <property type="entry name" value="FLAVIN-CONTAINING MONOOXYGENASE"/>
    <property type="match status" value="1"/>
</dbReference>
<dbReference type="Pfam" id="PF13738">
    <property type="entry name" value="Pyr_redox_3"/>
    <property type="match status" value="1"/>
</dbReference>
<dbReference type="PRINTS" id="PR00368">
    <property type="entry name" value="FADPNR"/>
</dbReference>
<dbReference type="PRINTS" id="PR00469">
    <property type="entry name" value="PNDRDTASEII"/>
</dbReference>
<dbReference type="SUPFAM" id="SSF51905">
    <property type="entry name" value="FAD/NAD(P)-binding domain"/>
    <property type="match status" value="2"/>
</dbReference>
<proteinExistence type="evidence at protein level"/>
<sequence length="411" mass="45406">MGTCRESEPTQIFVPGPIIVGAGPSGLAVAACLSNRGVPSVILERTDCLASLWQKRTYDRLKLHLPKHFCELPLMPFPKNFPKYPSKQLFISYVESYAARFNIKPVFNQTVEKAEFDDASGLWNVKTQDGVYTSTWLVVATGENAEPVFPNIPGLKKFTGPVVHTSAYKSGSAFANRKVLVVGCGNSGMEVSLDLCRYNALPHMVVRNSVHVLPRDFFGLSTFGIAMTLLKWFPLKLVDKFLLLLANSTLGNTDLLGLRRPKTGPIELKNVTGKTPVLDVGAISLIRSGQIKVTQAVKEITRNGAKFLNGKEIEFDSIILATGYKSNVPDWLKENSFFTKEGMPKTPFPNGWKGEKGLYTVGFTRRGLSGTAYDAVKIAEDITDQWMKFNGPLSCRNICSSHIIHLHFNKS</sequence>
<comment type="function">
    <text evidence="4 5 9 10">Involved in auxin biosynthesis. Both isoforms are catalitically active. Involved during embryogenesis and seedling development. Required for the formation of floral organs and vascular tissues. Belongs to the set of redundant YUCCA genes probably responsible for auxin biosynthesis in shoots.</text>
</comment>
<comment type="catalytic activity">
    <reaction evidence="10">
        <text>indole-3-pyruvate + NADPH + O2 + H(+) = (indol-3-yl)acetate + CO2 + NADP(+) + H2O</text>
        <dbReference type="Rhea" id="RHEA:34331"/>
        <dbReference type="ChEBI" id="CHEBI:15377"/>
        <dbReference type="ChEBI" id="CHEBI:15378"/>
        <dbReference type="ChEBI" id="CHEBI:15379"/>
        <dbReference type="ChEBI" id="CHEBI:16526"/>
        <dbReference type="ChEBI" id="CHEBI:17640"/>
        <dbReference type="ChEBI" id="CHEBI:30854"/>
        <dbReference type="ChEBI" id="CHEBI:57783"/>
        <dbReference type="ChEBI" id="CHEBI:58349"/>
        <dbReference type="EC" id="1.14.13.168"/>
    </reaction>
</comment>
<comment type="cofactor">
    <cofactor evidence="1">
        <name>FAD</name>
        <dbReference type="ChEBI" id="CHEBI:57692"/>
    </cofactor>
</comment>
<comment type="pathway">
    <text>Plant hormone metabolism; auxin biosynthesis.</text>
</comment>
<comment type="subcellular location">
    <molecule>Isoform 1</molecule>
    <subcellularLocation>
        <location>Cytoplasm</location>
    </subcellularLocation>
</comment>
<comment type="subcellular location">
    <molecule>Isoform 2</molecule>
    <subcellularLocation>
        <location>Endoplasmic reticulum membrane</location>
        <topology>Single-pass membrane protein</topology>
        <orientation>Cytoplasmic side</orientation>
    </subcellularLocation>
</comment>
<comment type="alternative products">
    <event type="alternative splicing"/>
    <isoform>
        <id>Q9LFM5-1</id>
        <name>1</name>
        <sequence type="displayed"/>
    </isoform>
    <isoform>
        <id>Q9LFM5-2</id>
        <name>2</name>
        <sequence type="described" ref="VSP_039987 VSP_039988"/>
    </isoform>
</comment>
<comment type="tissue specificity">
    <text evidence="4 10">Expressed in leaves, stems, flowers, buds and siliques. Detected in the apical gynoecium and in the developing ovules.</text>
</comment>
<comment type="developmental stage">
    <text evidence="5">Expression relatively broad during early stages of embryogenesis and more restricted to apical region of the cotyledons in the mature embryo.</text>
</comment>
<comment type="induction">
    <text evidence="3 6 7 8">Positively regulated by LEC2, by NGA3 and by STY1.</text>
</comment>
<comment type="disruption phenotype">
    <text evidence="4">No visible phenotype, due to the redundancy with the other members of the YUCCA family.</text>
</comment>
<comment type="miscellaneous">
    <molecule>Isoform 2</molecule>
    <text evidence="11">May be due to an intron retention. Expressed only in flowers. Contains a transmembrane at positions 334 - 354.</text>
</comment>
<comment type="similarity">
    <text evidence="11">Belongs to the FMO family.</text>
</comment>
<gene>
    <name type="primary">YUC4</name>
    <name type="synonym">THREAD</name>
    <name type="synonym">YUCCA4</name>
    <name type="ordered locus">At5g11320</name>
    <name type="ORF">F2I11_210</name>
</gene>
<evidence type="ECO:0000250" key="1"/>
<evidence type="ECO:0000255" key="2"/>
<evidence type="ECO:0000269" key="3">
    <source>
    </source>
</evidence>
<evidence type="ECO:0000269" key="4">
    <source>
    </source>
</evidence>
<evidence type="ECO:0000269" key="5">
    <source>
    </source>
</evidence>
<evidence type="ECO:0000269" key="6">
    <source>
    </source>
</evidence>
<evidence type="ECO:0000269" key="7">
    <source>
    </source>
</evidence>
<evidence type="ECO:0000269" key="8">
    <source>
    </source>
</evidence>
<evidence type="ECO:0000269" key="9">
    <source>
    </source>
</evidence>
<evidence type="ECO:0000269" key="10">
    <source>
    </source>
</evidence>
<evidence type="ECO:0000305" key="11"/>
<keyword id="KW-0025">Alternative splicing</keyword>
<keyword id="KW-0073">Auxin biosynthesis</keyword>
<keyword id="KW-0963">Cytoplasm</keyword>
<keyword id="KW-0256">Endoplasmic reticulum</keyword>
<keyword id="KW-0274">FAD</keyword>
<keyword id="KW-0285">Flavoprotein</keyword>
<keyword id="KW-0472">Membrane</keyword>
<keyword id="KW-0503">Monooxygenase</keyword>
<keyword id="KW-0521">NADP</keyword>
<keyword id="KW-0560">Oxidoreductase</keyword>
<keyword id="KW-1185">Reference proteome</keyword>
<feature type="chain" id="PRO_0000400071" description="Probable indole-3-pyruvate monooxygenase YUCCA4">
    <location>
        <begin position="1"/>
        <end position="411"/>
    </location>
</feature>
<feature type="binding site" evidence="2">
    <location>
        <begin position="21"/>
        <end position="26"/>
    </location>
    <ligand>
        <name>FAD</name>
        <dbReference type="ChEBI" id="CHEBI:57692"/>
    </ligand>
</feature>
<feature type="binding site" evidence="2">
    <location>
        <begin position="183"/>
        <end position="188"/>
    </location>
    <ligand>
        <name>NADP(+)</name>
        <dbReference type="ChEBI" id="CHEBI:58349"/>
    </ligand>
</feature>
<feature type="splice variant" id="VSP_039987" description="In isoform 2." evidence="11">
    <original>ENSFFTKEGMPKTPFPNGWKGEKG</original>
    <variation>VLLSIYYLSYSLSCYIYVNVYMYM</variation>
    <location>
        <begin position="334"/>
        <end position="357"/>
    </location>
</feature>
<feature type="splice variant" id="VSP_039988" description="In isoform 2." evidence="11">
    <location>
        <begin position="358"/>
        <end position="411"/>
    </location>
</feature>
<name>YUC4_ARATH</name>
<organism>
    <name type="scientific">Arabidopsis thaliana</name>
    <name type="common">Mouse-ear cress</name>
    <dbReference type="NCBI Taxonomy" id="3702"/>
    <lineage>
        <taxon>Eukaryota</taxon>
        <taxon>Viridiplantae</taxon>
        <taxon>Streptophyta</taxon>
        <taxon>Embryophyta</taxon>
        <taxon>Tracheophyta</taxon>
        <taxon>Spermatophyta</taxon>
        <taxon>Magnoliopsida</taxon>
        <taxon>eudicotyledons</taxon>
        <taxon>Gunneridae</taxon>
        <taxon>Pentapetalae</taxon>
        <taxon>rosids</taxon>
        <taxon>malvids</taxon>
        <taxon>Brassicales</taxon>
        <taxon>Brassicaceae</taxon>
        <taxon>Camelineae</taxon>
        <taxon>Arabidopsis</taxon>
    </lineage>
</organism>